<evidence type="ECO:0000250" key="1"/>
<evidence type="ECO:0000250" key="2">
    <source>
        <dbReference type="UniProtKB" id="Q9CXJ1"/>
    </source>
</evidence>
<evidence type="ECO:0000255" key="3"/>
<evidence type="ECO:0000269" key="4">
    <source>
    </source>
</evidence>
<evidence type="ECO:0000269" key="5">
    <source>
    </source>
</evidence>
<evidence type="ECO:0000269" key="6">
    <source>
    </source>
</evidence>
<evidence type="ECO:0000269" key="7">
    <source>
    </source>
</evidence>
<evidence type="ECO:0000269" key="8">
    <source>
    </source>
</evidence>
<evidence type="ECO:0000269" key="9">
    <source>
    </source>
</evidence>
<evidence type="ECO:0000269" key="10">
    <source>
    </source>
</evidence>
<evidence type="ECO:0000303" key="11">
    <source>
    </source>
</evidence>
<evidence type="ECO:0000303" key="12">
    <source>
    </source>
</evidence>
<evidence type="ECO:0000303" key="13">
    <source>
    </source>
</evidence>
<evidence type="ECO:0000305" key="14"/>
<evidence type="ECO:0000312" key="15">
    <source>
        <dbReference type="HGNC" id="HGNC:29419"/>
    </source>
</evidence>
<evidence type="ECO:0007744" key="16">
    <source>
    </source>
</evidence>
<dbReference type="EC" id="6.1.1.24" evidence="7"/>
<dbReference type="EC" id="6.1.1.17" evidence="7"/>
<dbReference type="EMBL" id="AK095998">
    <property type="protein sequence ID" value="BAG53194.1"/>
    <property type="molecule type" value="mRNA"/>
</dbReference>
<dbReference type="EMBL" id="AL832489">
    <property type="protein sequence ID" value="CAI46121.1"/>
    <property type="molecule type" value="mRNA"/>
</dbReference>
<dbReference type="EMBL" id="CH471145">
    <property type="protein sequence ID" value="EAW55822.1"/>
    <property type="molecule type" value="Genomic_DNA"/>
</dbReference>
<dbReference type="EMBL" id="CH471145">
    <property type="protein sequence ID" value="EAW55824.1"/>
    <property type="molecule type" value="Genomic_DNA"/>
</dbReference>
<dbReference type="EMBL" id="BC040013">
    <property type="protein sequence ID" value="AAH40013.1"/>
    <property type="molecule type" value="mRNA"/>
</dbReference>
<dbReference type="EMBL" id="AB075850">
    <property type="protein sequence ID" value="BAB85556.1"/>
    <property type="molecule type" value="mRNA"/>
</dbReference>
<dbReference type="CCDS" id="CCDS42132.1">
    <molecule id="Q5JPH6-1"/>
</dbReference>
<dbReference type="CCDS" id="CCDS76844.1">
    <molecule id="Q5JPH6-2"/>
</dbReference>
<dbReference type="RefSeq" id="NP_001077083.1">
    <molecule id="Q5JPH6-1"/>
    <property type="nucleotide sequence ID" value="NM_001083614.2"/>
</dbReference>
<dbReference type="RefSeq" id="NP_001295140.1">
    <molecule id="Q5JPH6-2"/>
    <property type="nucleotide sequence ID" value="NM_001308211.1"/>
</dbReference>
<dbReference type="SMR" id="Q5JPH6"/>
<dbReference type="BioGRID" id="125866">
    <property type="interactions" value="154"/>
</dbReference>
<dbReference type="FunCoup" id="Q5JPH6">
    <property type="interactions" value="1320"/>
</dbReference>
<dbReference type="IntAct" id="Q5JPH6">
    <property type="interactions" value="43"/>
</dbReference>
<dbReference type="MINT" id="Q5JPH6"/>
<dbReference type="STRING" id="9606.ENSP00000456218"/>
<dbReference type="DrugBank" id="DB00142">
    <property type="generic name" value="Glutamic acid"/>
</dbReference>
<dbReference type="GlyGen" id="Q5JPH6">
    <property type="glycosylation" value="1 site, 1 N-linked glycan (1 site)"/>
</dbReference>
<dbReference type="iPTMnet" id="Q5JPH6"/>
<dbReference type="PhosphoSitePlus" id="Q5JPH6"/>
<dbReference type="SwissPalm" id="Q5JPH6"/>
<dbReference type="BioMuta" id="EARS2"/>
<dbReference type="DMDM" id="117949790"/>
<dbReference type="jPOST" id="Q5JPH6"/>
<dbReference type="MassIVE" id="Q5JPH6"/>
<dbReference type="PaxDb" id="9606-ENSP00000395196"/>
<dbReference type="PeptideAtlas" id="Q5JPH6"/>
<dbReference type="ProteomicsDB" id="63015">
    <molecule id="Q5JPH6-1"/>
</dbReference>
<dbReference type="Pumba" id="Q5JPH6"/>
<dbReference type="Antibodypedia" id="25969">
    <property type="antibodies" value="123 antibodies from 22 providers"/>
</dbReference>
<dbReference type="DNASU" id="124454"/>
<dbReference type="Ensembl" id="ENST00000449606.7">
    <molecule id="Q5JPH6-1"/>
    <property type="protein sequence ID" value="ENSP00000395196.2"/>
    <property type="gene ID" value="ENSG00000103356.18"/>
</dbReference>
<dbReference type="Ensembl" id="ENST00000563232.1">
    <molecule id="Q5JPH6-2"/>
    <property type="protein sequence ID" value="ENSP00000456218.1"/>
    <property type="gene ID" value="ENSG00000103356.18"/>
</dbReference>
<dbReference type="Ensembl" id="ENST00000674054.1">
    <molecule id="Q5JPH6-1"/>
    <property type="protein sequence ID" value="ENSP00000501251.1"/>
    <property type="gene ID" value="ENSG00000103356.18"/>
</dbReference>
<dbReference type="GeneID" id="124454"/>
<dbReference type="KEGG" id="hsa:124454"/>
<dbReference type="MANE-Select" id="ENST00000449606.7">
    <property type="protein sequence ID" value="ENSP00000395196.2"/>
    <property type="RefSeq nucleotide sequence ID" value="NM_001083614.2"/>
    <property type="RefSeq protein sequence ID" value="NP_001077083.1"/>
</dbReference>
<dbReference type="UCSC" id="uc002dlt.5">
    <molecule id="Q5JPH6-1"/>
    <property type="organism name" value="human"/>
</dbReference>
<dbReference type="AGR" id="HGNC:29419"/>
<dbReference type="CTD" id="124454"/>
<dbReference type="DisGeNET" id="124454"/>
<dbReference type="GeneCards" id="EARS2"/>
<dbReference type="HGNC" id="HGNC:29419">
    <property type="gene designation" value="EARS2"/>
</dbReference>
<dbReference type="HPA" id="ENSG00000103356">
    <property type="expression patterns" value="Low tissue specificity"/>
</dbReference>
<dbReference type="MalaCards" id="EARS2"/>
<dbReference type="MIM" id="612799">
    <property type="type" value="gene"/>
</dbReference>
<dbReference type="MIM" id="614924">
    <property type="type" value="phenotype"/>
</dbReference>
<dbReference type="neXtProt" id="NX_Q5JPH6"/>
<dbReference type="OpenTargets" id="ENSG00000103356"/>
<dbReference type="Orphanet" id="314051">
    <property type="disease" value="Leukoencephalopathy-thalamus and brainstem anomalies-high lactate syndrome"/>
</dbReference>
<dbReference type="PharmGKB" id="PA144596439"/>
<dbReference type="VEuPathDB" id="HostDB:ENSG00000103356"/>
<dbReference type="eggNOG" id="KOG1149">
    <property type="taxonomic scope" value="Eukaryota"/>
</dbReference>
<dbReference type="GeneTree" id="ENSGT00390000009759"/>
<dbReference type="HOGENOM" id="CLU_015768_6_3_1"/>
<dbReference type="InParanoid" id="Q5JPH6"/>
<dbReference type="OMA" id="QAPRYDN"/>
<dbReference type="OrthoDB" id="428822at2759"/>
<dbReference type="PAN-GO" id="Q5JPH6">
    <property type="GO annotations" value="3 GO annotations based on evolutionary models"/>
</dbReference>
<dbReference type="PhylomeDB" id="Q5JPH6"/>
<dbReference type="TreeFam" id="TF313268"/>
<dbReference type="PathwayCommons" id="Q5JPH6"/>
<dbReference type="Reactome" id="R-HSA-379726">
    <property type="pathway name" value="Mitochondrial tRNA aminoacylation"/>
</dbReference>
<dbReference type="SignaLink" id="Q5JPH6"/>
<dbReference type="SIGNOR" id="Q5JPH6"/>
<dbReference type="BioGRID-ORCS" id="124454">
    <property type="hits" value="383 hits in 1166 CRISPR screens"/>
</dbReference>
<dbReference type="ChiTaRS" id="EARS2">
    <property type="organism name" value="human"/>
</dbReference>
<dbReference type="GenomeRNAi" id="124454"/>
<dbReference type="Pharos" id="Q5JPH6">
    <property type="development level" value="Tbio"/>
</dbReference>
<dbReference type="PRO" id="PR:Q5JPH6"/>
<dbReference type="Proteomes" id="UP000005640">
    <property type="component" value="Chromosome 16"/>
</dbReference>
<dbReference type="RNAct" id="Q5JPH6">
    <property type="molecule type" value="protein"/>
</dbReference>
<dbReference type="Bgee" id="ENSG00000103356">
    <property type="expression patterns" value="Expressed in adrenal tissue and 164 other cell types or tissues"/>
</dbReference>
<dbReference type="ExpressionAtlas" id="Q5JPH6">
    <property type="expression patterns" value="baseline and differential"/>
</dbReference>
<dbReference type="GO" id="GO:0005759">
    <property type="term" value="C:mitochondrial matrix"/>
    <property type="evidence" value="ECO:0007669"/>
    <property type="project" value="UniProtKB-SubCell"/>
</dbReference>
<dbReference type="GO" id="GO:0005739">
    <property type="term" value="C:mitochondrion"/>
    <property type="evidence" value="ECO:0000314"/>
    <property type="project" value="UniProtKB"/>
</dbReference>
<dbReference type="GO" id="GO:0005524">
    <property type="term" value="F:ATP binding"/>
    <property type="evidence" value="ECO:0007669"/>
    <property type="project" value="UniProtKB-KW"/>
</dbReference>
<dbReference type="GO" id="GO:0004818">
    <property type="term" value="F:glutamate-tRNA ligase activity"/>
    <property type="evidence" value="ECO:0000314"/>
    <property type="project" value="UniProtKB"/>
</dbReference>
<dbReference type="GO" id="GO:0050561">
    <property type="term" value="F:glutamate-tRNA(Gln) ligase activity"/>
    <property type="evidence" value="ECO:0000314"/>
    <property type="project" value="UniProtKB"/>
</dbReference>
<dbReference type="GO" id="GO:0000049">
    <property type="term" value="F:tRNA binding"/>
    <property type="evidence" value="ECO:0007669"/>
    <property type="project" value="InterPro"/>
</dbReference>
<dbReference type="GO" id="GO:0008270">
    <property type="term" value="F:zinc ion binding"/>
    <property type="evidence" value="ECO:0007669"/>
    <property type="project" value="InterPro"/>
</dbReference>
<dbReference type="GO" id="GO:0006424">
    <property type="term" value="P:glutamyl-tRNA aminoacylation"/>
    <property type="evidence" value="ECO:0000314"/>
    <property type="project" value="UniProtKB"/>
</dbReference>
<dbReference type="GO" id="GO:0070127">
    <property type="term" value="P:tRNA aminoacylation for mitochondrial protein translation"/>
    <property type="evidence" value="ECO:0000314"/>
    <property type="project" value="UniProtKB"/>
</dbReference>
<dbReference type="CDD" id="cd00808">
    <property type="entry name" value="GluRS_core"/>
    <property type="match status" value="1"/>
</dbReference>
<dbReference type="FunFam" id="3.40.50.620:FF:000045">
    <property type="entry name" value="Glutamate--tRNA ligase, mitochondrial"/>
    <property type="match status" value="1"/>
</dbReference>
<dbReference type="FunFam" id="1.10.10.350:FF:000003">
    <property type="entry name" value="probable glutamate--tRNA ligase, mitochondrial isoform X2"/>
    <property type="match status" value="1"/>
</dbReference>
<dbReference type="Gene3D" id="1.10.10.350">
    <property type="match status" value="1"/>
</dbReference>
<dbReference type="Gene3D" id="3.40.50.620">
    <property type="entry name" value="HUPs"/>
    <property type="match status" value="1"/>
</dbReference>
<dbReference type="HAMAP" id="MF_00022">
    <property type="entry name" value="Glu_tRNA_synth_type1"/>
    <property type="match status" value="1"/>
</dbReference>
<dbReference type="InterPro" id="IPR045462">
    <property type="entry name" value="aa-tRNA-synth_I_cd-bd"/>
</dbReference>
<dbReference type="InterPro" id="IPR020751">
    <property type="entry name" value="aa-tRNA-synth_I_codon-bd_sub2"/>
</dbReference>
<dbReference type="InterPro" id="IPR001412">
    <property type="entry name" value="aa-tRNA-synth_I_CS"/>
</dbReference>
<dbReference type="InterPro" id="IPR008925">
    <property type="entry name" value="aa_tRNA-synth_I_cd-bd_sf"/>
</dbReference>
<dbReference type="InterPro" id="IPR004527">
    <property type="entry name" value="Glu-tRNA-ligase_bac/mito"/>
</dbReference>
<dbReference type="InterPro" id="IPR000924">
    <property type="entry name" value="Glu/Gln-tRNA-synth"/>
</dbReference>
<dbReference type="InterPro" id="IPR020058">
    <property type="entry name" value="Glu/Gln-tRNA-synth_Ib_cat-dom"/>
</dbReference>
<dbReference type="InterPro" id="IPR049940">
    <property type="entry name" value="GluQ/Sye"/>
</dbReference>
<dbReference type="InterPro" id="IPR033910">
    <property type="entry name" value="GluRS_core"/>
</dbReference>
<dbReference type="InterPro" id="IPR014729">
    <property type="entry name" value="Rossmann-like_a/b/a_fold"/>
</dbReference>
<dbReference type="NCBIfam" id="TIGR00464">
    <property type="entry name" value="gltX_bact"/>
    <property type="match status" value="1"/>
</dbReference>
<dbReference type="PANTHER" id="PTHR43311">
    <property type="entry name" value="GLUTAMATE--TRNA LIGASE"/>
    <property type="match status" value="1"/>
</dbReference>
<dbReference type="PANTHER" id="PTHR43311:SF2">
    <property type="entry name" value="GLUTAMATE--TRNA LIGASE, MITOCHONDRIAL-RELATED"/>
    <property type="match status" value="1"/>
</dbReference>
<dbReference type="Pfam" id="PF19269">
    <property type="entry name" value="Anticodon_2"/>
    <property type="match status" value="1"/>
</dbReference>
<dbReference type="Pfam" id="PF00749">
    <property type="entry name" value="tRNA-synt_1c"/>
    <property type="match status" value="1"/>
</dbReference>
<dbReference type="PRINTS" id="PR00987">
    <property type="entry name" value="TRNASYNTHGLU"/>
</dbReference>
<dbReference type="SUPFAM" id="SSF48163">
    <property type="entry name" value="An anticodon-binding domain of class I aminoacyl-tRNA synthetases"/>
    <property type="match status" value="1"/>
</dbReference>
<dbReference type="SUPFAM" id="SSF52374">
    <property type="entry name" value="Nucleotidylyl transferase"/>
    <property type="match status" value="1"/>
</dbReference>
<dbReference type="PROSITE" id="PS00178">
    <property type="entry name" value="AA_TRNA_LIGASE_I"/>
    <property type="match status" value="1"/>
</dbReference>
<keyword id="KW-0007">Acetylation</keyword>
<keyword id="KW-0025">Alternative splicing</keyword>
<keyword id="KW-0030">Aminoacyl-tRNA synthetase</keyword>
<keyword id="KW-0067">ATP-binding</keyword>
<keyword id="KW-0225">Disease variant</keyword>
<keyword id="KW-0436">Ligase</keyword>
<keyword id="KW-0496">Mitochondrion</keyword>
<keyword id="KW-0547">Nucleotide-binding</keyword>
<keyword id="KW-1274">Primary mitochondrial disease</keyword>
<keyword id="KW-0648">Protein biosynthesis</keyword>
<keyword id="KW-1267">Proteomics identification</keyword>
<keyword id="KW-1185">Reference proteome</keyword>
<keyword id="KW-0694">RNA-binding</keyword>
<keyword id="KW-0809">Transit peptide</keyword>
<sequence>MAALLRRLLQRERPSAASGRPVGRREANLGTDAGVAVRVRFAPSPTGFLHLGGLRTALYNYIFAKKYQGSFILRLEDTDQTRVVPGAAENIEDMLEWAGIPPDESPRRGGPAGPYQQSQRLELYAQATEALLKTGAAYPCFCSPQRLELLKKEALRNHQTPRYDNRCRNMSQEQVAQKLAKDPKPAIRFRLEQVVPAFQDLVYGWNRHEVASVEGDPVIMKSDGFPTYHLACVVDDHHMGISHVLRGSEWLVSTAKHLLLYQALGWQPPHFAHLPLLLNRDGSKLSKRQGDVFLEHFAADGFLPDSLLDIITNCGSGFAENQMGRTLPELITQFNLTQVTCHSALLDLEKLPEFNRLHLQRLVSNESQRRQLVGKLQVLVEEAFGCQLQNRDVLNPVYVERILLLRQGHICRLQDLVSPVYSYLWTRPAVGRAQLDAISEKVDVIAKRVLGLLERSSMSLTQDMLNGELKKLSEGLEGTKYSNVMKLLRMALSGQQQGPPVAEMMLALGPKEVRERIQKVVSS</sequence>
<organism>
    <name type="scientific">Homo sapiens</name>
    <name type="common">Human</name>
    <dbReference type="NCBI Taxonomy" id="9606"/>
    <lineage>
        <taxon>Eukaryota</taxon>
        <taxon>Metazoa</taxon>
        <taxon>Chordata</taxon>
        <taxon>Craniata</taxon>
        <taxon>Vertebrata</taxon>
        <taxon>Euteleostomi</taxon>
        <taxon>Mammalia</taxon>
        <taxon>Eutheria</taxon>
        <taxon>Euarchontoglires</taxon>
        <taxon>Primates</taxon>
        <taxon>Haplorrhini</taxon>
        <taxon>Catarrhini</taxon>
        <taxon>Hominidae</taxon>
        <taxon>Homo</taxon>
    </lineage>
</organism>
<feature type="transit peptide" description="Mitochondrion" evidence="3">
    <location>
        <begin position="1"/>
        <end position="41"/>
    </location>
</feature>
<feature type="chain" id="PRO_0000254560" description="Nondiscriminating glutamyl-tRNA synthetase EARS2, mitochondrial">
    <location>
        <begin position="42"/>
        <end position="523"/>
    </location>
</feature>
<feature type="short sequence motif" description="'HIGH' region">
    <location>
        <begin position="45"/>
        <end position="53"/>
    </location>
</feature>
<feature type="short sequence motif" description="'KMSKS' region">
    <location>
        <begin position="284"/>
        <end position="288"/>
    </location>
</feature>
<feature type="binding site" evidence="1">
    <location>
        <begin position="40"/>
        <end position="42"/>
    </location>
    <ligand>
        <name>L-glutamate</name>
        <dbReference type="ChEBI" id="CHEBI:29985"/>
    </ligand>
</feature>
<feature type="binding site" evidence="1">
    <location>
        <position position="50"/>
    </location>
    <ligand>
        <name>ATP</name>
        <dbReference type="ChEBI" id="CHEBI:30616"/>
    </ligand>
</feature>
<feature type="binding site" evidence="1">
    <location>
        <position position="76"/>
    </location>
    <ligand>
        <name>L-glutamate</name>
        <dbReference type="ChEBI" id="CHEBI:29985"/>
    </ligand>
</feature>
<feature type="binding site" evidence="1">
    <location>
        <begin position="228"/>
        <end position="232"/>
    </location>
    <ligand>
        <name>L-glutamate</name>
        <dbReference type="ChEBI" id="CHEBI:29985"/>
    </ligand>
</feature>
<feature type="binding site" evidence="1">
    <location>
        <position position="246"/>
    </location>
    <ligand>
        <name>L-glutamate</name>
        <dbReference type="ChEBI" id="CHEBI:29985"/>
    </ligand>
</feature>
<feature type="binding site" evidence="1">
    <location>
        <position position="249"/>
    </location>
    <ligand>
        <name>ATP</name>
        <dbReference type="ChEBI" id="CHEBI:30616"/>
    </ligand>
</feature>
<feature type="binding site" evidence="1">
    <location>
        <begin position="284"/>
        <end position="288"/>
    </location>
    <ligand>
        <name>ATP</name>
        <dbReference type="ChEBI" id="CHEBI:30616"/>
    </ligand>
</feature>
<feature type="modified residue" description="N6-succinyllysine" evidence="2">
    <location>
        <position position="256"/>
    </location>
</feature>
<feature type="modified residue" description="N6-acetyllysine" evidence="16">
    <location>
        <position position="486"/>
    </location>
</feature>
<feature type="splice variant" id="VSP_057203" description="In isoform 2." evidence="12">
    <original>QGPPVAEMMLALGPKEVRERIQKVVSS</original>
    <variation>VRQGHGLDCSLEPLIDPLNLHFLAGTELNIEYTKVNET</variation>
    <location>
        <begin position="497"/>
        <end position="523"/>
    </location>
</feature>
<feature type="sequence variant" id="VAR_069235" description="In COXPD12; dbSNP:rs770862902." evidence="8">
    <original>R</original>
    <variation>H</variation>
    <location>
        <position position="55"/>
    </location>
</feature>
<feature type="sequence variant" id="VAR_069236" description="In COXPD12; dbSNP:rs397514595." evidence="9">
    <original>K</original>
    <variation>E</variation>
    <location>
        <position position="65"/>
    </location>
</feature>
<feature type="sequence variant" id="VAR_069237" description="In COXPD12; dbSNP:rs397514593." evidence="8">
    <original>E</original>
    <variation>K</variation>
    <location>
        <position position="96"/>
    </location>
</feature>
<feature type="sequence variant" id="VAR_076183" description="In COXPD12; dbSNP:rs1355685453." evidence="10">
    <original>R</original>
    <variation>C</variation>
    <location>
        <position position="107"/>
    </location>
</feature>
<feature type="sequence variant" id="VAR_069238" description="In COXPD12; dbSNP:rs1021330566." evidence="8">
    <original>R</original>
    <variation>H</variation>
    <location>
        <position position="107"/>
    </location>
</feature>
<feature type="sequence variant" id="VAR_069239" description="In COXPD12; dbSNP:rs376103091." evidence="8">
    <original>R</original>
    <variation>W</variation>
    <location>
        <position position="108"/>
    </location>
</feature>
<feature type="sequence variant" id="VAR_069240" description="In COXPD12; dbSNP:rs201842633." evidence="8">
    <original>G</original>
    <variation>S</variation>
    <location>
        <position position="110"/>
    </location>
</feature>
<feature type="sequence variant" id="VAR_069241" description="In COXPD12; dbSNP:rs397514594." evidence="8">
    <original>C</original>
    <variation>Y</variation>
    <location>
        <position position="167"/>
    </location>
</feature>
<feature type="sequence variant" id="VAR_069242" description="In COXPD12; dbSNP:rs397514591." evidence="8">
    <original>R</original>
    <variation>G</variation>
    <location>
        <position position="168"/>
    </location>
</feature>
<feature type="sequence variant" id="VAR_069243" description="In COXPD12; dbSNP:rs397514592." evidence="8">
    <original>G</original>
    <variation>S</variation>
    <location>
        <position position="204"/>
    </location>
</feature>
<feature type="sequence variant" id="VAR_069244" description="In COXPD12; dbSNP:rs141129877." evidence="8">
    <original>G</original>
    <variation>S</variation>
    <location>
        <position position="224"/>
    </location>
</feature>
<feature type="sequence variant" id="VAR_069245" description="In COXPD12; dbSNP:rs746838793." evidence="8">
    <original>G</original>
    <variation>C</variation>
    <location>
        <position position="317"/>
    </location>
</feature>
<feature type="sequence variant" id="VAR_069246" description="In COXPD12." evidence="8">
    <original>TR</original>
    <variation>L</variation>
    <location>
        <begin position="426"/>
        <end position="427"/>
    </location>
</feature>
<feature type="sequence variant" id="VAR_028840" description="In dbSNP:rs6497671." evidence="4 5 6">
    <original>S</original>
    <variation>G</variation>
    <location>
        <position position="457"/>
    </location>
</feature>
<feature type="sequence variant" id="VAR_076184" description="In COXPD12; dbSNP:rs757965573." evidence="10">
    <original>R</original>
    <variation>Q</variation>
    <location>
        <position position="489"/>
    </location>
</feature>
<feature type="sequence variant" id="VAR_069247" description="In COXPD12; dbSNP:rs201727231." evidence="8">
    <original>R</original>
    <variation>Q</variation>
    <location>
        <position position="516"/>
    </location>
</feature>
<reference key="1">
    <citation type="journal article" date="2004" name="Nat. Genet.">
        <title>Complete sequencing and characterization of 21,243 full-length human cDNAs.</title>
        <authorList>
            <person name="Ota T."/>
            <person name="Suzuki Y."/>
            <person name="Nishikawa T."/>
            <person name="Otsuki T."/>
            <person name="Sugiyama T."/>
            <person name="Irie R."/>
            <person name="Wakamatsu A."/>
            <person name="Hayashi K."/>
            <person name="Sato H."/>
            <person name="Nagai K."/>
            <person name="Kimura K."/>
            <person name="Makita H."/>
            <person name="Sekine M."/>
            <person name="Obayashi M."/>
            <person name="Nishi T."/>
            <person name="Shibahara T."/>
            <person name="Tanaka T."/>
            <person name="Ishii S."/>
            <person name="Yamamoto J."/>
            <person name="Saito K."/>
            <person name="Kawai Y."/>
            <person name="Isono Y."/>
            <person name="Nakamura Y."/>
            <person name="Nagahari K."/>
            <person name="Murakami K."/>
            <person name="Yasuda T."/>
            <person name="Iwayanagi T."/>
            <person name="Wagatsuma M."/>
            <person name="Shiratori A."/>
            <person name="Sudo H."/>
            <person name="Hosoiri T."/>
            <person name="Kaku Y."/>
            <person name="Kodaira H."/>
            <person name="Kondo H."/>
            <person name="Sugawara M."/>
            <person name="Takahashi M."/>
            <person name="Kanda K."/>
            <person name="Yokoi T."/>
            <person name="Furuya T."/>
            <person name="Kikkawa E."/>
            <person name="Omura Y."/>
            <person name="Abe K."/>
            <person name="Kamihara K."/>
            <person name="Katsuta N."/>
            <person name="Sato K."/>
            <person name="Tanikawa M."/>
            <person name="Yamazaki M."/>
            <person name="Ninomiya K."/>
            <person name="Ishibashi T."/>
            <person name="Yamashita H."/>
            <person name="Murakawa K."/>
            <person name="Fujimori K."/>
            <person name="Tanai H."/>
            <person name="Kimata M."/>
            <person name="Watanabe M."/>
            <person name="Hiraoka S."/>
            <person name="Chiba Y."/>
            <person name="Ishida S."/>
            <person name="Ono Y."/>
            <person name="Takiguchi S."/>
            <person name="Watanabe S."/>
            <person name="Yosida M."/>
            <person name="Hotuta T."/>
            <person name="Kusano J."/>
            <person name="Kanehori K."/>
            <person name="Takahashi-Fujii A."/>
            <person name="Hara H."/>
            <person name="Tanase T.-O."/>
            <person name="Nomura Y."/>
            <person name="Togiya S."/>
            <person name="Komai F."/>
            <person name="Hara R."/>
            <person name="Takeuchi K."/>
            <person name="Arita M."/>
            <person name="Imose N."/>
            <person name="Musashino K."/>
            <person name="Yuuki H."/>
            <person name="Oshima A."/>
            <person name="Sasaki N."/>
            <person name="Aotsuka S."/>
            <person name="Yoshikawa Y."/>
            <person name="Matsunawa H."/>
            <person name="Ichihara T."/>
            <person name="Shiohata N."/>
            <person name="Sano S."/>
            <person name="Moriya S."/>
            <person name="Momiyama H."/>
            <person name="Satoh N."/>
            <person name="Takami S."/>
            <person name="Terashima Y."/>
            <person name="Suzuki O."/>
            <person name="Nakagawa S."/>
            <person name="Senoh A."/>
            <person name="Mizoguchi H."/>
            <person name="Goto Y."/>
            <person name="Shimizu F."/>
            <person name="Wakebe H."/>
            <person name="Hishigaki H."/>
            <person name="Watanabe T."/>
            <person name="Sugiyama A."/>
            <person name="Takemoto M."/>
            <person name="Kawakami B."/>
            <person name="Yamazaki M."/>
            <person name="Watanabe K."/>
            <person name="Kumagai A."/>
            <person name="Itakura S."/>
            <person name="Fukuzumi Y."/>
            <person name="Fujimori Y."/>
            <person name="Komiyama M."/>
            <person name="Tashiro H."/>
            <person name="Tanigami A."/>
            <person name="Fujiwara T."/>
            <person name="Ono T."/>
            <person name="Yamada K."/>
            <person name="Fujii Y."/>
            <person name="Ozaki K."/>
            <person name="Hirao M."/>
            <person name="Ohmori Y."/>
            <person name="Kawabata A."/>
            <person name="Hikiji T."/>
            <person name="Kobatake N."/>
            <person name="Inagaki H."/>
            <person name="Ikema Y."/>
            <person name="Okamoto S."/>
            <person name="Okitani R."/>
            <person name="Kawakami T."/>
            <person name="Noguchi S."/>
            <person name="Itoh T."/>
            <person name="Shigeta K."/>
            <person name="Senba T."/>
            <person name="Matsumura K."/>
            <person name="Nakajima Y."/>
            <person name="Mizuno T."/>
            <person name="Morinaga M."/>
            <person name="Sasaki M."/>
            <person name="Togashi T."/>
            <person name="Oyama M."/>
            <person name="Hata H."/>
            <person name="Watanabe M."/>
            <person name="Komatsu T."/>
            <person name="Mizushima-Sugano J."/>
            <person name="Satoh T."/>
            <person name="Shirai Y."/>
            <person name="Takahashi Y."/>
            <person name="Nakagawa K."/>
            <person name="Okumura K."/>
            <person name="Nagase T."/>
            <person name="Nomura N."/>
            <person name="Kikuchi H."/>
            <person name="Masuho Y."/>
            <person name="Yamashita R."/>
            <person name="Nakai K."/>
            <person name="Yada T."/>
            <person name="Nakamura Y."/>
            <person name="Ohara O."/>
            <person name="Isogai T."/>
            <person name="Sugano S."/>
        </authorList>
    </citation>
    <scope>NUCLEOTIDE SEQUENCE [LARGE SCALE MRNA] (ISOFORM 1)</scope>
    <scope>VARIANT GLY-457</scope>
    <source>
        <tissue>Kidney</tissue>
    </source>
</reference>
<reference key="2">
    <citation type="journal article" date="2007" name="BMC Genomics">
        <title>The full-ORF clone resource of the German cDNA consortium.</title>
        <authorList>
            <person name="Bechtel S."/>
            <person name="Rosenfelder H."/>
            <person name="Duda A."/>
            <person name="Schmidt C.P."/>
            <person name="Ernst U."/>
            <person name="Wellenreuther R."/>
            <person name="Mehrle A."/>
            <person name="Schuster C."/>
            <person name="Bahr A."/>
            <person name="Bloecker H."/>
            <person name="Heubner D."/>
            <person name="Hoerlein A."/>
            <person name="Michel G."/>
            <person name="Wedler H."/>
            <person name="Koehrer K."/>
            <person name="Ottenwaelder B."/>
            <person name="Poustka A."/>
            <person name="Wiemann S."/>
            <person name="Schupp I."/>
        </authorList>
    </citation>
    <scope>NUCLEOTIDE SEQUENCE [LARGE SCALE MRNA] (ISOFORM 1)</scope>
    <scope>VARIANT GLY-457</scope>
    <source>
        <tissue>Testis</tissue>
    </source>
</reference>
<reference key="3">
    <citation type="submission" date="2005-09" db="EMBL/GenBank/DDBJ databases">
        <authorList>
            <person name="Mural R.J."/>
            <person name="Istrail S."/>
            <person name="Sutton G.G."/>
            <person name="Florea L."/>
            <person name="Halpern A.L."/>
            <person name="Mobarry C.M."/>
            <person name="Lippert R."/>
            <person name="Walenz B."/>
            <person name="Shatkay H."/>
            <person name="Dew I."/>
            <person name="Miller J.R."/>
            <person name="Flanigan M.J."/>
            <person name="Edwards N.J."/>
            <person name="Bolanos R."/>
            <person name="Fasulo D."/>
            <person name="Halldorsson B.V."/>
            <person name="Hannenhalli S."/>
            <person name="Turner R."/>
            <person name="Yooseph S."/>
            <person name="Lu F."/>
            <person name="Nusskern D.R."/>
            <person name="Shue B.C."/>
            <person name="Zheng X.H."/>
            <person name="Zhong F."/>
            <person name="Delcher A.L."/>
            <person name="Huson D.H."/>
            <person name="Kravitz S.A."/>
            <person name="Mouchard L."/>
            <person name="Reinert K."/>
            <person name="Remington K.A."/>
            <person name="Clark A.G."/>
            <person name="Waterman M.S."/>
            <person name="Eichler E.E."/>
            <person name="Adams M.D."/>
            <person name="Hunkapiller M.W."/>
            <person name="Myers E.W."/>
            <person name="Venter J.C."/>
        </authorList>
    </citation>
    <scope>NUCLEOTIDE SEQUENCE [LARGE SCALE GENOMIC DNA]</scope>
</reference>
<reference key="4">
    <citation type="journal article" date="2004" name="Genome Res.">
        <title>The status, quality, and expansion of the NIH full-length cDNA project: the Mammalian Gene Collection (MGC).</title>
        <authorList>
            <consortium name="The MGC Project Team"/>
        </authorList>
    </citation>
    <scope>NUCLEOTIDE SEQUENCE [LARGE SCALE MRNA] (ISOFORM 2)</scope>
    <scope>VARIANT GLY-457</scope>
    <source>
        <tissue>Brain</tissue>
    </source>
</reference>
<reference key="5">
    <citation type="journal article" date="2001" name="DNA Res.">
        <title>Prediction of the coding sequences of unidentified human genes. XXII. The complete sequences of 50 new cDNA clones which code for large proteins.</title>
        <authorList>
            <person name="Nagase T."/>
            <person name="Kikuno R."/>
            <person name="Ohara O."/>
        </authorList>
    </citation>
    <scope>NUCLEOTIDE SEQUENCE [LARGE SCALE MRNA] OF 5-523 (ISOFORM 1)</scope>
    <source>
        <tissue>Brain</tissue>
    </source>
</reference>
<reference key="6">
    <citation type="journal article" date="2005" name="Biochemistry">
        <title>Toward the full set of human mitochondrial aminoacyl-tRNA synthetases: characterization of AspRS and TyrRS.</title>
        <authorList>
            <person name="Bonnefond L."/>
            <person name="Fender A."/>
            <person name="Rudinger-Thirion J."/>
            <person name="Giege R."/>
            <person name="Florentz C."/>
            <person name="Sissler M."/>
        </authorList>
    </citation>
    <scope>IDENTIFICATION</scope>
</reference>
<reference key="7">
    <citation type="journal article" date="2009" name="Proc. Natl. Acad. Sci. U.S.A.">
        <title>Biogenesis of glutaminyl-mt tRNAGln in human mitochondria.</title>
        <authorList>
            <person name="Nagao A."/>
            <person name="Suzuki T."/>
            <person name="Katoh T."/>
            <person name="Sakaguchi Y."/>
            <person name="Suzuki T."/>
        </authorList>
    </citation>
    <scope>FUNCTION</scope>
    <scope>CATALYTIC ACTIVITY</scope>
    <scope>BIOPHYSICOCHEMICAL PROPERTIES</scope>
    <scope>SUBCELLULAR LOCATION</scope>
</reference>
<reference key="8">
    <citation type="journal article" date="2009" name="Science">
        <title>Lysine acetylation targets protein complexes and co-regulates major cellular functions.</title>
        <authorList>
            <person name="Choudhary C."/>
            <person name="Kumar C."/>
            <person name="Gnad F."/>
            <person name="Nielsen M.L."/>
            <person name="Rehman M."/>
            <person name="Walther T.C."/>
            <person name="Olsen J.V."/>
            <person name="Mann M."/>
        </authorList>
    </citation>
    <scope>ACETYLATION [LARGE SCALE ANALYSIS] AT LYS-486</scope>
    <scope>IDENTIFICATION BY MASS SPECTROMETRY [LARGE SCALE ANALYSIS]</scope>
</reference>
<reference key="9">
    <citation type="journal article" date="2011" name="BMC Syst. Biol.">
        <title>Initial characterization of the human central proteome.</title>
        <authorList>
            <person name="Burkard T.R."/>
            <person name="Planyavsky M."/>
            <person name="Kaupe I."/>
            <person name="Breitwieser F.P."/>
            <person name="Buerckstuemmer T."/>
            <person name="Bennett K.L."/>
            <person name="Superti-Furga G."/>
            <person name="Colinge J."/>
        </authorList>
    </citation>
    <scope>IDENTIFICATION BY MASS SPECTROMETRY [LARGE SCALE ANALYSIS]</scope>
</reference>
<reference key="10">
    <citation type="journal article" date="2014" name="J. Proteomics">
        <title>An enzyme assisted RP-RPLC approach for in-depth analysis of human liver phosphoproteome.</title>
        <authorList>
            <person name="Bian Y."/>
            <person name="Song C."/>
            <person name="Cheng K."/>
            <person name="Dong M."/>
            <person name="Wang F."/>
            <person name="Huang J."/>
            <person name="Sun D."/>
            <person name="Wang L."/>
            <person name="Ye M."/>
            <person name="Zou H."/>
        </authorList>
    </citation>
    <scope>IDENTIFICATION BY MASS SPECTROMETRY [LARGE SCALE ANALYSIS]</scope>
    <source>
        <tissue>Liver</tissue>
    </source>
</reference>
<reference key="11">
    <citation type="journal article" date="2015" name="Proteomics">
        <title>N-terminome analysis of the human mitochondrial proteome.</title>
        <authorList>
            <person name="Vaca Jacome A.S."/>
            <person name="Rabilloud T."/>
            <person name="Schaeffer-Reiss C."/>
            <person name="Rompais M."/>
            <person name="Ayoub D."/>
            <person name="Lane L."/>
            <person name="Bairoch A."/>
            <person name="Van Dorsselaer A."/>
            <person name="Carapito C."/>
        </authorList>
    </citation>
    <scope>IDENTIFICATION BY MASS SPECTROMETRY [LARGE SCALE ANALYSIS]</scope>
</reference>
<reference key="12">
    <citation type="journal article" date="2012" name="Brain">
        <title>Leukoencephalopathy with thalamus and brainstem involvement and high lactate 'LTBL' caused by EARS2 mutations.</title>
        <authorList>
            <person name="Steenweg M.E."/>
            <person name="Ghezzi D."/>
            <person name="Haack T."/>
            <person name="Abbink T.E."/>
            <person name="Martinelli D."/>
            <person name="van Berkel C.G."/>
            <person name="Bley A."/>
            <person name="Diogo L."/>
            <person name="Grillo E."/>
            <person name="Te Water Naude J."/>
            <person name="Strom T.M."/>
            <person name="Bertini E."/>
            <person name="Prokisch H."/>
            <person name="van der Knaap M.S."/>
            <person name="Zeviani M."/>
        </authorList>
    </citation>
    <scope>VARIANTS COXPD12 HIS-55; LYS-96; HIS-107; TRP-108; SER-110; TYR-167; GLY-168; SER-204; SER-224; CYS-317; 426-THR-ARG-427 DELINS LEU AND GLN-516</scope>
</reference>
<reference key="13">
    <citation type="journal article" date="2013" name="Brain">
        <title>Multisystem fatal infantile disease caused by a novel homozygous EARS2 mutation.</title>
        <authorList>
            <person name="Talim B."/>
            <person name="Pyle A."/>
            <person name="Griffin H."/>
            <person name="Topaloglu H."/>
            <person name="Tokatli A."/>
            <person name="Keogh M.J."/>
            <person name="Santibanez-Koref M."/>
            <person name="Chinnery P.F."/>
            <person name="Horvath R."/>
        </authorList>
    </citation>
    <scope>VARIANT COXPD12 GLU-65</scope>
</reference>
<reference key="14">
    <citation type="journal article" date="2016" name="PLoS Genet.">
        <title>A comprehensive genomic analysis reveals the genetic landscape of mitochondrial respiratory chain complex deficiencies.</title>
        <authorList>
            <person name="Kohda M."/>
            <person name="Tokuzawa Y."/>
            <person name="Kishita Y."/>
            <person name="Nyuzuki H."/>
            <person name="Moriyama Y."/>
            <person name="Mizuno Y."/>
            <person name="Hirata T."/>
            <person name="Yatsuka Y."/>
            <person name="Yamashita-Sugahara Y."/>
            <person name="Nakachi Y."/>
            <person name="Kato H."/>
            <person name="Okuda A."/>
            <person name="Tamaru S."/>
            <person name="Borna N.N."/>
            <person name="Banshoya K."/>
            <person name="Aigaki T."/>
            <person name="Sato-Miyata Y."/>
            <person name="Ohnuma K."/>
            <person name="Suzuki T."/>
            <person name="Nagao A."/>
            <person name="Maehata H."/>
            <person name="Matsuda F."/>
            <person name="Higasa K."/>
            <person name="Nagasaki M."/>
            <person name="Yasuda J."/>
            <person name="Yamamoto M."/>
            <person name="Fushimi T."/>
            <person name="Shimura M."/>
            <person name="Kaiho-Ichimoto K."/>
            <person name="Harashima H."/>
            <person name="Yamazaki T."/>
            <person name="Mori M."/>
            <person name="Murayama K."/>
            <person name="Ohtake A."/>
            <person name="Okazaki Y."/>
        </authorList>
    </citation>
    <scope>VARIANTS COXPD12 CYS-107 AND GLN-489</scope>
</reference>
<comment type="function">
    <text evidence="7">Non-discriminating glutamyl-tRNA synthetase that catalyzes aminoacylation of both mitochondrial tRNA(Glu) and tRNA(Gln) and participates in RNA aminoacylation for mitochondrial protein translation (PubMed:19805282). Attachs glutamate to tRNA(Glu) or tRNA(Gln) in a two-step reaction: glutamate is first activated by ATP to form Glu-AMP and then transferred to the acceptor end of tRNA(Glu) or tRNA(Gln) (PubMed:19805282). In vitro, cytoplasmic tRNA(Gln) is slightly glutamylated, but with low activity (PubMed:19805282).</text>
</comment>
<comment type="catalytic activity">
    <reaction evidence="7">
        <text>tRNA(Glx) + L-glutamate + ATP = L-glutamyl-tRNA(Glx) + AMP + diphosphate</text>
        <dbReference type="Rhea" id="RHEA:18397"/>
        <dbReference type="Rhea" id="RHEA-COMP:9713"/>
        <dbReference type="Rhea" id="RHEA-COMP:9716"/>
        <dbReference type="ChEBI" id="CHEBI:29985"/>
        <dbReference type="ChEBI" id="CHEBI:30616"/>
        <dbReference type="ChEBI" id="CHEBI:33019"/>
        <dbReference type="ChEBI" id="CHEBI:78442"/>
        <dbReference type="ChEBI" id="CHEBI:78520"/>
        <dbReference type="ChEBI" id="CHEBI:456215"/>
        <dbReference type="EC" id="6.1.1.24"/>
    </reaction>
    <physiologicalReaction direction="left-to-right" evidence="7">
        <dbReference type="Rhea" id="RHEA:18398"/>
    </physiologicalReaction>
</comment>
<comment type="catalytic activity">
    <reaction evidence="7">
        <text>tRNA(Glu) + L-glutamate + ATP = L-glutamyl-tRNA(Glu) + AMP + diphosphate</text>
        <dbReference type="Rhea" id="RHEA:23540"/>
        <dbReference type="Rhea" id="RHEA-COMP:9663"/>
        <dbReference type="Rhea" id="RHEA-COMP:9680"/>
        <dbReference type="ChEBI" id="CHEBI:29985"/>
        <dbReference type="ChEBI" id="CHEBI:30616"/>
        <dbReference type="ChEBI" id="CHEBI:33019"/>
        <dbReference type="ChEBI" id="CHEBI:78442"/>
        <dbReference type="ChEBI" id="CHEBI:78520"/>
        <dbReference type="ChEBI" id="CHEBI:456215"/>
        <dbReference type="EC" id="6.1.1.17"/>
    </reaction>
    <physiologicalReaction direction="left-to-right" evidence="7">
        <dbReference type="Rhea" id="RHEA:23541"/>
    </physiologicalReaction>
</comment>
<comment type="catalytic activity">
    <reaction evidence="7">
        <text>tRNA(Gln) + L-glutamate + ATP = L-glutamyl-tRNA(Gln) + AMP + diphosphate</text>
        <dbReference type="Rhea" id="RHEA:64612"/>
        <dbReference type="Rhea" id="RHEA-COMP:9662"/>
        <dbReference type="Rhea" id="RHEA-COMP:9684"/>
        <dbReference type="ChEBI" id="CHEBI:29985"/>
        <dbReference type="ChEBI" id="CHEBI:30616"/>
        <dbReference type="ChEBI" id="CHEBI:33019"/>
        <dbReference type="ChEBI" id="CHEBI:78442"/>
        <dbReference type="ChEBI" id="CHEBI:78520"/>
        <dbReference type="ChEBI" id="CHEBI:456215"/>
    </reaction>
    <physiologicalReaction direction="left-to-right" evidence="7">
        <dbReference type="Rhea" id="RHEA:64613"/>
    </physiologicalReaction>
</comment>
<comment type="biophysicochemical properties">
    <kinetics>
        <KM evidence="7">0.27 uM for tRNA(Glu)</KM>
        <KM evidence="7">1.7 uM for tRNA(Gln)</KM>
    </kinetics>
</comment>
<comment type="subcellular location">
    <subcellularLocation>
        <location evidence="7">Mitochondrion matrix</location>
    </subcellularLocation>
</comment>
<comment type="alternative products">
    <event type="alternative splicing"/>
    <isoform>
        <id>Q5JPH6-1</id>
        <name>1</name>
        <sequence type="displayed"/>
    </isoform>
    <isoform>
        <id>Q5JPH6-2</id>
        <name>2</name>
        <sequence type="described" ref="VSP_057203"/>
    </isoform>
</comment>
<comment type="disease" evidence="8 9 10">
    <disease id="DI-03612">
        <name>Combined oxidative phosphorylation deficiency 12</name>
        <acronym>COXPD12</acronym>
        <description>An autosomal recessive, mitochondrial, neurologic disorder characterized by onset in infancy of hypotonia and delayed psychomotor development, or early developmental regression, associated with T2-weighted hyperintensities in the deep cerebral white matter, brainstem, and cerebellar white matter. Serum lactate is increased due to a defect in mitochondrial respiration. There are 2 main phenotypic groups: those with a milder disease course and some recovery of skills after age 2 years, and those with a severe disease course resulting in marked disability.</description>
        <dbReference type="MIM" id="614924"/>
    </disease>
    <text>The disease is caused by variants affecting the gene represented in this entry.</text>
</comment>
<comment type="similarity">
    <text evidence="14">Belongs to the class-I aminoacyl-tRNA synthetase family. Glutamate--tRNA ligase type 1 subfamily.</text>
</comment>
<protein>
    <recommendedName>
        <fullName evidence="14">Nondiscriminating glutamyl-tRNA synthetase EARS2, mitochondrial</fullName>
        <ecNumber evidence="7">6.1.1.24</ecNumber>
    </recommendedName>
    <alternativeName>
        <fullName evidence="14">Glutamate--tRNA(Gln) ligase EARS2, mitochondrial</fullName>
        <ecNumber evidence="7">6.1.1.17</ecNumber>
    </alternativeName>
    <alternativeName>
        <fullName>Glutamyl-tRNA synthetase</fullName>
        <shortName>GluRS</shortName>
    </alternativeName>
    <alternativeName>
        <fullName evidence="13">Mitochondrial glutamyl-tRNA synthetase</fullName>
        <shortName evidence="13">mtGluRS</shortName>
    </alternativeName>
</protein>
<name>SYEM_HUMAN</name>
<accession>Q5JPH6</accession>
<accession>B3KTT2</accession>
<accession>D3DWF1</accession>
<accession>Q86YH3</accession>
<accession>Q8TF31</accession>
<gene>
    <name evidence="15" type="primary">EARS2</name>
    <name evidence="11" type="synonym">KIAA1970</name>
</gene>
<proteinExistence type="evidence at protein level"/>